<protein>
    <recommendedName>
        <fullName evidence="1">UDP-N-acetylglucosamine--N-acetylmuramyl-(pentapeptide) pyrophosphoryl-undecaprenol N-acetylglucosamine transferase</fullName>
        <ecNumber evidence="1">2.4.1.227</ecNumber>
    </recommendedName>
    <alternativeName>
        <fullName evidence="1">Undecaprenyl-PP-MurNAc-pentapeptide-UDPGlcNAc GlcNAc transferase</fullName>
    </alternativeName>
</protein>
<name>MURG_SACD2</name>
<comment type="function">
    <text evidence="1">Cell wall formation. Catalyzes the transfer of a GlcNAc subunit on undecaprenyl-pyrophosphoryl-MurNAc-pentapeptide (lipid intermediate I) to form undecaprenyl-pyrophosphoryl-MurNAc-(pentapeptide)GlcNAc (lipid intermediate II).</text>
</comment>
<comment type="catalytic activity">
    <reaction evidence="1">
        <text>di-trans,octa-cis-undecaprenyl diphospho-N-acetyl-alpha-D-muramoyl-L-alanyl-D-glutamyl-meso-2,6-diaminopimeloyl-D-alanyl-D-alanine + UDP-N-acetyl-alpha-D-glucosamine = di-trans,octa-cis-undecaprenyl diphospho-[N-acetyl-alpha-D-glucosaminyl-(1-&gt;4)]-N-acetyl-alpha-D-muramoyl-L-alanyl-D-glutamyl-meso-2,6-diaminopimeloyl-D-alanyl-D-alanine + UDP + H(+)</text>
        <dbReference type="Rhea" id="RHEA:31227"/>
        <dbReference type="ChEBI" id="CHEBI:15378"/>
        <dbReference type="ChEBI" id="CHEBI:57705"/>
        <dbReference type="ChEBI" id="CHEBI:58223"/>
        <dbReference type="ChEBI" id="CHEBI:61387"/>
        <dbReference type="ChEBI" id="CHEBI:61388"/>
        <dbReference type="EC" id="2.4.1.227"/>
    </reaction>
</comment>
<comment type="pathway">
    <text evidence="1">Cell wall biogenesis; peptidoglycan biosynthesis.</text>
</comment>
<comment type="subcellular location">
    <subcellularLocation>
        <location evidence="1">Cell inner membrane</location>
        <topology evidence="1">Peripheral membrane protein</topology>
        <orientation evidence="1">Cytoplasmic side</orientation>
    </subcellularLocation>
</comment>
<comment type="similarity">
    <text evidence="1">Belongs to the glycosyltransferase 28 family. MurG subfamily.</text>
</comment>
<organism>
    <name type="scientific">Saccharophagus degradans (strain 2-40 / ATCC 43961 / DSM 17024)</name>
    <dbReference type="NCBI Taxonomy" id="203122"/>
    <lineage>
        <taxon>Bacteria</taxon>
        <taxon>Pseudomonadati</taxon>
        <taxon>Pseudomonadota</taxon>
        <taxon>Gammaproteobacteria</taxon>
        <taxon>Cellvibrionales</taxon>
        <taxon>Cellvibrionaceae</taxon>
        <taxon>Saccharophagus</taxon>
    </lineage>
</organism>
<keyword id="KW-0131">Cell cycle</keyword>
<keyword id="KW-0132">Cell division</keyword>
<keyword id="KW-0997">Cell inner membrane</keyword>
<keyword id="KW-1003">Cell membrane</keyword>
<keyword id="KW-0133">Cell shape</keyword>
<keyword id="KW-0961">Cell wall biogenesis/degradation</keyword>
<keyword id="KW-0328">Glycosyltransferase</keyword>
<keyword id="KW-0472">Membrane</keyword>
<keyword id="KW-0573">Peptidoglycan synthesis</keyword>
<keyword id="KW-1185">Reference proteome</keyword>
<keyword id="KW-0808">Transferase</keyword>
<gene>
    <name evidence="1" type="primary">murG</name>
    <name type="ordered locus">Sde_0848</name>
</gene>
<accession>Q21MG9</accession>
<evidence type="ECO:0000255" key="1">
    <source>
        <dbReference type="HAMAP-Rule" id="MF_00033"/>
    </source>
</evidence>
<sequence length="389" mass="41797">MSRSQADSTSASEKRTVRKVVARKFIERPKTVVIMAGGTGGHVYPGLAVAEAMHQRGFNIAWLGSRGGMEKELVAKASEQMGFDIAFSEIEISGVRGKGRMALLAAPFRVLKAIEQAKQILQKLRPALVIGMGGFVAGPGGMAARKLKIPLVIHEQNAAAGTTNKILRRFANLTLVAFPGSLKNGVFVGNPVRKDIETVAPPQQRFAQKEGPIKVLVLGGSRGALAINEMVPAAFGKVNKALPFQIVHQTGKDKLEATKESYALAGVKANVVPYIELMSEALEWADFAICRSGALTVSELAAVGLGAVFIPFPYAIDDHQTKNADFLVQCGAAVVKQQKELSPEILAVLLNELLAGRERLQQMAVKAKQQSKPHAAEKFADFCEELIHD</sequence>
<reference key="1">
    <citation type="journal article" date="2008" name="PLoS Genet.">
        <title>Complete genome sequence of the complex carbohydrate-degrading marine bacterium, Saccharophagus degradans strain 2-40 T.</title>
        <authorList>
            <person name="Weiner R.M."/>
            <person name="Taylor L.E. II"/>
            <person name="Henrissat B."/>
            <person name="Hauser L."/>
            <person name="Land M."/>
            <person name="Coutinho P.M."/>
            <person name="Rancurel C."/>
            <person name="Saunders E.H."/>
            <person name="Longmire A.G."/>
            <person name="Zhang H."/>
            <person name="Bayer E.A."/>
            <person name="Gilbert H.J."/>
            <person name="Larimer F."/>
            <person name="Zhulin I.B."/>
            <person name="Ekborg N.A."/>
            <person name="Lamed R."/>
            <person name="Richardson P.M."/>
            <person name="Borovok I."/>
            <person name="Hutcheson S."/>
        </authorList>
    </citation>
    <scope>NUCLEOTIDE SEQUENCE [LARGE SCALE GENOMIC DNA]</scope>
    <source>
        <strain>2-40 / ATCC 43961 / DSM 17024</strain>
    </source>
</reference>
<feature type="chain" id="PRO_0000315162" description="UDP-N-acetylglucosamine--N-acetylmuramyl-(pentapeptide) pyrophosphoryl-undecaprenol N-acetylglucosamine transferase">
    <location>
        <begin position="1"/>
        <end position="389"/>
    </location>
</feature>
<feature type="binding site" evidence="1">
    <location>
        <begin position="39"/>
        <end position="41"/>
    </location>
    <ligand>
        <name>UDP-N-acetyl-alpha-D-glucosamine</name>
        <dbReference type="ChEBI" id="CHEBI:57705"/>
    </ligand>
</feature>
<feature type="binding site" evidence="1">
    <location>
        <position position="157"/>
    </location>
    <ligand>
        <name>UDP-N-acetyl-alpha-D-glucosamine</name>
        <dbReference type="ChEBI" id="CHEBI:57705"/>
    </ligand>
</feature>
<feature type="binding site" evidence="1">
    <location>
        <position position="193"/>
    </location>
    <ligand>
        <name>UDP-N-acetyl-alpha-D-glucosamine</name>
        <dbReference type="ChEBI" id="CHEBI:57705"/>
    </ligand>
</feature>
<feature type="binding site" evidence="1">
    <location>
        <position position="221"/>
    </location>
    <ligand>
        <name>UDP-N-acetyl-alpha-D-glucosamine</name>
        <dbReference type="ChEBI" id="CHEBI:57705"/>
    </ligand>
</feature>
<feature type="binding site" evidence="1">
    <location>
        <position position="275"/>
    </location>
    <ligand>
        <name>UDP-N-acetyl-alpha-D-glucosamine</name>
        <dbReference type="ChEBI" id="CHEBI:57705"/>
    </ligand>
</feature>
<feature type="binding site" evidence="1">
    <location>
        <begin position="294"/>
        <end position="299"/>
    </location>
    <ligand>
        <name>UDP-N-acetyl-alpha-D-glucosamine</name>
        <dbReference type="ChEBI" id="CHEBI:57705"/>
    </ligand>
</feature>
<feature type="binding site" evidence="1">
    <location>
        <position position="320"/>
    </location>
    <ligand>
        <name>UDP-N-acetyl-alpha-D-glucosamine</name>
        <dbReference type="ChEBI" id="CHEBI:57705"/>
    </ligand>
</feature>
<dbReference type="EC" id="2.4.1.227" evidence="1"/>
<dbReference type="EMBL" id="CP000282">
    <property type="protein sequence ID" value="ABD80110.1"/>
    <property type="molecule type" value="Genomic_DNA"/>
</dbReference>
<dbReference type="RefSeq" id="WP_011467331.1">
    <property type="nucleotide sequence ID" value="NC_007912.1"/>
</dbReference>
<dbReference type="SMR" id="Q21MG9"/>
<dbReference type="STRING" id="203122.Sde_0848"/>
<dbReference type="CAZy" id="GT28">
    <property type="family name" value="Glycosyltransferase Family 28"/>
</dbReference>
<dbReference type="GeneID" id="98612530"/>
<dbReference type="KEGG" id="sde:Sde_0848"/>
<dbReference type="eggNOG" id="COG0707">
    <property type="taxonomic scope" value="Bacteria"/>
</dbReference>
<dbReference type="HOGENOM" id="CLU_037404_2_0_6"/>
<dbReference type="OrthoDB" id="9808936at2"/>
<dbReference type="UniPathway" id="UPA00219"/>
<dbReference type="Proteomes" id="UP000001947">
    <property type="component" value="Chromosome"/>
</dbReference>
<dbReference type="GO" id="GO:0005886">
    <property type="term" value="C:plasma membrane"/>
    <property type="evidence" value="ECO:0007669"/>
    <property type="project" value="UniProtKB-SubCell"/>
</dbReference>
<dbReference type="GO" id="GO:0051991">
    <property type="term" value="F:UDP-N-acetyl-D-glucosamine:N-acetylmuramoyl-L-alanyl-D-glutamyl-meso-2,6-diaminopimelyl-D-alanyl-D-alanine-diphosphoundecaprenol 4-beta-N-acetylglucosaminlytransferase activity"/>
    <property type="evidence" value="ECO:0007669"/>
    <property type="project" value="RHEA"/>
</dbReference>
<dbReference type="GO" id="GO:0050511">
    <property type="term" value="F:undecaprenyldiphospho-muramoylpentapeptide beta-N-acetylglucosaminyltransferase activity"/>
    <property type="evidence" value="ECO:0007669"/>
    <property type="project" value="UniProtKB-UniRule"/>
</dbReference>
<dbReference type="GO" id="GO:0005975">
    <property type="term" value="P:carbohydrate metabolic process"/>
    <property type="evidence" value="ECO:0007669"/>
    <property type="project" value="InterPro"/>
</dbReference>
<dbReference type="GO" id="GO:0051301">
    <property type="term" value="P:cell division"/>
    <property type="evidence" value="ECO:0007669"/>
    <property type="project" value="UniProtKB-KW"/>
</dbReference>
<dbReference type="GO" id="GO:0071555">
    <property type="term" value="P:cell wall organization"/>
    <property type="evidence" value="ECO:0007669"/>
    <property type="project" value="UniProtKB-KW"/>
</dbReference>
<dbReference type="GO" id="GO:0030259">
    <property type="term" value="P:lipid glycosylation"/>
    <property type="evidence" value="ECO:0007669"/>
    <property type="project" value="UniProtKB-UniRule"/>
</dbReference>
<dbReference type="GO" id="GO:0009252">
    <property type="term" value="P:peptidoglycan biosynthetic process"/>
    <property type="evidence" value="ECO:0007669"/>
    <property type="project" value="UniProtKB-UniRule"/>
</dbReference>
<dbReference type="GO" id="GO:0008360">
    <property type="term" value="P:regulation of cell shape"/>
    <property type="evidence" value="ECO:0007669"/>
    <property type="project" value="UniProtKB-KW"/>
</dbReference>
<dbReference type="CDD" id="cd03785">
    <property type="entry name" value="GT28_MurG"/>
    <property type="match status" value="1"/>
</dbReference>
<dbReference type="Gene3D" id="3.40.50.2000">
    <property type="entry name" value="Glycogen Phosphorylase B"/>
    <property type="match status" value="2"/>
</dbReference>
<dbReference type="HAMAP" id="MF_00033">
    <property type="entry name" value="MurG"/>
    <property type="match status" value="1"/>
</dbReference>
<dbReference type="InterPro" id="IPR006009">
    <property type="entry name" value="GlcNAc_MurG"/>
</dbReference>
<dbReference type="InterPro" id="IPR007235">
    <property type="entry name" value="Glyco_trans_28_C"/>
</dbReference>
<dbReference type="InterPro" id="IPR004276">
    <property type="entry name" value="GlycoTrans_28_N"/>
</dbReference>
<dbReference type="NCBIfam" id="TIGR01133">
    <property type="entry name" value="murG"/>
    <property type="match status" value="1"/>
</dbReference>
<dbReference type="PANTHER" id="PTHR21015:SF22">
    <property type="entry name" value="GLYCOSYLTRANSFERASE"/>
    <property type="match status" value="1"/>
</dbReference>
<dbReference type="PANTHER" id="PTHR21015">
    <property type="entry name" value="UDP-N-ACETYLGLUCOSAMINE--N-ACETYLMURAMYL-(PENTAPEPTIDE) PYROPHOSPHORYL-UNDECAPRENOL N-ACETYLGLUCOSAMINE TRANSFERASE 1"/>
    <property type="match status" value="1"/>
</dbReference>
<dbReference type="Pfam" id="PF04101">
    <property type="entry name" value="Glyco_tran_28_C"/>
    <property type="match status" value="1"/>
</dbReference>
<dbReference type="Pfam" id="PF03033">
    <property type="entry name" value="Glyco_transf_28"/>
    <property type="match status" value="1"/>
</dbReference>
<dbReference type="SUPFAM" id="SSF53756">
    <property type="entry name" value="UDP-Glycosyltransferase/glycogen phosphorylase"/>
    <property type="match status" value="1"/>
</dbReference>
<proteinExistence type="inferred from homology"/>